<feature type="signal peptide" evidence="2">
    <location>
        <begin position="1"/>
        <end position="26"/>
    </location>
</feature>
<feature type="propeptide" id="PRO_0000013143">
    <location>
        <begin position="27"/>
        <end position="96"/>
    </location>
</feature>
<feature type="peptide" id="PRO_0000013144" description="Uroguanylin">
    <location>
        <begin position="97"/>
        <end position="111"/>
    </location>
</feature>
<feature type="disulfide bond" evidence="1">
    <location>
        <begin position="67"/>
        <end position="80"/>
    </location>
</feature>
<feature type="disulfide bond" evidence="1">
    <location>
        <begin position="100"/>
        <end position="108"/>
    </location>
</feature>
<feature type="disulfide bond" evidence="1">
    <location>
        <begin position="103"/>
        <end position="111"/>
    </location>
</feature>
<accession>P70107</accession>
<organism>
    <name type="scientific">Cavia porcellus</name>
    <name type="common">Guinea pig</name>
    <dbReference type="NCBI Taxonomy" id="10141"/>
    <lineage>
        <taxon>Eukaryota</taxon>
        <taxon>Metazoa</taxon>
        <taxon>Chordata</taxon>
        <taxon>Craniata</taxon>
        <taxon>Vertebrata</taxon>
        <taxon>Euteleostomi</taxon>
        <taxon>Mammalia</taxon>
        <taxon>Eutheria</taxon>
        <taxon>Euarchontoglires</taxon>
        <taxon>Glires</taxon>
        <taxon>Rodentia</taxon>
        <taxon>Hystricomorpha</taxon>
        <taxon>Caviidae</taxon>
        <taxon>Cavia</taxon>
    </lineage>
</organism>
<name>GUC2B_CAVPO</name>
<reference key="1">
    <citation type="submission" date="1996-08" db="EMBL/GenBank/DDBJ databases">
        <authorList>
            <person name="Kruhoeffer M."/>
            <person name="Meyer M.F."/>
            <person name="Schlatter E."/>
            <person name="Kaempf U."/>
            <person name="Cetin Y."/>
            <person name="Forssmann W.-G."/>
        </authorList>
    </citation>
    <scope>NUCLEOTIDE SEQUENCE [MRNA]</scope>
    <source>
        <tissue>Stomach</tissue>
    </source>
</reference>
<dbReference type="EMBL" id="Z74738">
    <property type="protein sequence ID" value="CAA98994.1"/>
    <property type="molecule type" value="mRNA"/>
</dbReference>
<dbReference type="RefSeq" id="NP_001166429.1">
    <property type="nucleotide sequence ID" value="NM_001172958.1"/>
</dbReference>
<dbReference type="SMR" id="P70107"/>
<dbReference type="FunCoup" id="P70107">
    <property type="interactions" value="20"/>
</dbReference>
<dbReference type="STRING" id="10141.ENSCPOP00000006119"/>
<dbReference type="GeneID" id="100135535"/>
<dbReference type="KEGG" id="cpoc:100135535"/>
<dbReference type="CTD" id="2981"/>
<dbReference type="eggNOG" id="ENOG502S7QR">
    <property type="taxonomic scope" value="Eukaryota"/>
</dbReference>
<dbReference type="HOGENOM" id="CLU_166952_1_0_1"/>
<dbReference type="InParanoid" id="P70107"/>
<dbReference type="OrthoDB" id="8936251at2759"/>
<dbReference type="Proteomes" id="UP000005447">
    <property type="component" value="Unassembled WGS sequence"/>
</dbReference>
<dbReference type="GO" id="GO:0005576">
    <property type="term" value="C:extracellular region"/>
    <property type="evidence" value="ECO:0007669"/>
    <property type="project" value="UniProtKB-SubCell"/>
</dbReference>
<dbReference type="GO" id="GO:0030250">
    <property type="term" value="F:guanylate cyclase activator activity"/>
    <property type="evidence" value="ECO:0007669"/>
    <property type="project" value="InterPro"/>
</dbReference>
<dbReference type="FunFam" id="3.90.1450.10:FF:000001">
    <property type="entry name" value="Guanylate cyclase activator 2B"/>
    <property type="match status" value="1"/>
</dbReference>
<dbReference type="Gene3D" id="3.90.1450.10">
    <property type="entry name" value="Guanylin"/>
    <property type="match status" value="1"/>
</dbReference>
<dbReference type="InterPro" id="IPR000879">
    <property type="entry name" value="Guanylin"/>
</dbReference>
<dbReference type="InterPro" id="IPR036382">
    <property type="entry name" value="Guanylin_sf"/>
</dbReference>
<dbReference type="PANTHER" id="PTHR11318:SF4">
    <property type="entry name" value="GUANYLATE CYCLASE ACTIVATOR 2B"/>
    <property type="match status" value="1"/>
</dbReference>
<dbReference type="PANTHER" id="PTHR11318">
    <property type="entry name" value="GUANYLIN FAMILY MEMBER"/>
    <property type="match status" value="1"/>
</dbReference>
<dbReference type="Pfam" id="PF02058">
    <property type="entry name" value="Guanylin"/>
    <property type="match status" value="1"/>
</dbReference>
<dbReference type="PIRSF" id="PIRSF001849">
    <property type="entry name" value="Guanylin"/>
    <property type="match status" value="1"/>
</dbReference>
<dbReference type="PRINTS" id="PR00774">
    <property type="entry name" value="GUANYLIN"/>
</dbReference>
<dbReference type="SUPFAM" id="SSF89890">
    <property type="entry name" value="Proguanylin"/>
    <property type="match status" value="1"/>
</dbReference>
<proteinExistence type="inferred from homology"/>
<protein>
    <recommendedName>
        <fullName>Guanylate cyclase activator 2B</fullName>
    </recommendedName>
    <component>
        <recommendedName>
            <fullName>Uroguanylin</fullName>
            <shortName>UGN</shortName>
        </recommendedName>
    </component>
</protein>
<evidence type="ECO:0000250" key="1"/>
<evidence type="ECO:0000255" key="2"/>
<evidence type="ECO:0000305" key="3"/>
<sequence length="111" mass="12125">MGSRTLLGHLSVLAVVLLLLLQGTQSVDIKYQGYQVQLESVKKLKALEEQWVSSPRLQAQDPQPAVCHHPALPLDLQPICTSQEAASILQALRTMDNDECELCVNIACTGC</sequence>
<gene>
    <name type="primary">GUCA2B</name>
</gene>
<comment type="function">
    <text>Endogenous activator of intestinal guanylate cyclase. It stimulates this enzyme through the same receptor binding region as the heat-stable enterotoxins. May be a potent physiological regulator of intestinal fluid and electrolyte transport. May be an autocrine/paracrine regulator of intestinal salt and water transport.</text>
</comment>
<comment type="subcellular location">
    <subcellularLocation>
        <location>Secreted</location>
    </subcellularLocation>
</comment>
<comment type="similarity">
    <text evidence="3">Belongs to the guanylin family.</text>
</comment>
<keyword id="KW-1015">Disulfide bond</keyword>
<keyword id="KW-1185">Reference proteome</keyword>
<keyword id="KW-0964">Secreted</keyword>
<keyword id="KW-0732">Signal</keyword>